<accession>P0DUC6</accession>
<evidence type="ECO:0000250" key="1">
    <source>
        <dbReference type="UniProtKB" id="P0C248"/>
    </source>
</evidence>
<evidence type="ECO:0000250" key="2">
    <source>
        <dbReference type="UniProtKB" id="P0C250"/>
    </source>
</evidence>
<evidence type="ECO:0000250" key="3">
    <source>
        <dbReference type="UniProtKB" id="P62903"/>
    </source>
</evidence>
<evidence type="ECO:0000250" key="4">
    <source>
        <dbReference type="UniProtKB" id="P83047"/>
    </source>
</evidence>
<evidence type="ECO:0000269" key="5">
    <source>
    </source>
</evidence>
<evidence type="ECO:0000303" key="6">
    <source>
    </source>
</evidence>
<evidence type="ECO:0000305" key="7"/>
<evidence type="ECO:0000305" key="8">
    <source>
    </source>
</evidence>
<comment type="function">
    <text evidence="1 2 3 4">Its target is unknown, but this toxin may modulate voltage-activated calcium channels (Cav) or calcium-dependent potassium channels (KCa).</text>
</comment>
<comment type="subcellular location">
    <subcellularLocation>
        <location evidence="5">Secreted</location>
    </subcellularLocation>
</comment>
<comment type="tissue specificity">
    <text evidence="8">Expressed by the venom duct.</text>
</comment>
<comment type="domain">
    <text evidence="7">The cysteine framework is C-C.</text>
</comment>
<comment type="mass spectrometry" mass="1044.1" method="Electrospray" evidence="5">
    <text>Average mass, Li1044 (with bromoTrp-7).</text>
</comment>
<comment type="mass spectrometry" mass="966.1" method="Electrospray" evidence="5">
    <text>Average mass, Li965.</text>
</comment>
<comment type="similarity">
    <text evidence="7">Belongs to the O2 superfamily. Contryphan family.</text>
</comment>
<proteinExistence type="evidence at protein level"/>
<organism>
    <name type="scientific">Conus lividus</name>
    <name type="common">Livid cone</name>
    <dbReference type="NCBI Taxonomy" id="89426"/>
    <lineage>
        <taxon>Eukaryota</taxon>
        <taxon>Metazoa</taxon>
        <taxon>Spiralia</taxon>
        <taxon>Lophotrochozoa</taxon>
        <taxon>Mollusca</taxon>
        <taxon>Gastropoda</taxon>
        <taxon>Caenogastropoda</taxon>
        <taxon>Neogastropoda</taxon>
        <taxon>Conoidea</taxon>
        <taxon>Conidae</taxon>
        <taxon>Conus</taxon>
        <taxon>Lividoconus</taxon>
    </lineage>
</organism>
<keyword id="KW-0027">Amidation</keyword>
<keyword id="KW-0102">Bromination</keyword>
<keyword id="KW-0903">Direct protein sequencing</keyword>
<keyword id="KW-1015">Disulfide bond</keyword>
<keyword id="KW-0872">Ion channel impairing toxin</keyword>
<keyword id="KW-0964">Secreted</keyword>
<keyword id="KW-0800">Toxin</keyword>
<sequence length="8" mass="969">GCEWVSWC</sequence>
<reference key="1">
    <citation type="journal article" date="2017" name="Toxicon">
        <title>Identification of short single disulfide-containing contryphans from the venom of cone snails using de novo mass spectrometry-based sequencing methods.</title>
        <authorList>
            <person name="Franklin J.B."/>
            <person name="Rajesh R.P."/>
            <person name="Vinithkumar N.V."/>
            <person name="Kirubagaran R."/>
        </authorList>
    </citation>
    <scope>PROTEIN SEQUENCE</scope>
    <scope>SUBCELLULAR LOCATION</scope>
    <scope>MASS SPECTROMETRY</scope>
    <scope>BROMINATION AT TRP-7</scope>
    <scope>AMIDATION AT CYS-8</scope>
    <scope>DISULFIDE BOND</scope>
    <source>
        <tissue>Venom</tissue>
    </source>
</reference>
<protein>
    <recommendedName>
        <fullName evidence="6">Contryphan Li1044/Li965</fullName>
    </recommendedName>
</protein>
<dbReference type="GO" id="GO:0005576">
    <property type="term" value="C:extracellular region"/>
    <property type="evidence" value="ECO:0007669"/>
    <property type="project" value="UniProtKB-SubCell"/>
</dbReference>
<dbReference type="GO" id="GO:0099106">
    <property type="term" value="F:ion channel regulator activity"/>
    <property type="evidence" value="ECO:0007669"/>
    <property type="project" value="UniProtKB-KW"/>
</dbReference>
<dbReference type="GO" id="GO:0090729">
    <property type="term" value="F:toxin activity"/>
    <property type="evidence" value="ECO:0007669"/>
    <property type="project" value="UniProtKB-KW"/>
</dbReference>
<feature type="peptide" id="PRO_0000451480" description="Contryphan Li1044/Li965" evidence="5">
    <location>
        <begin position="1"/>
        <end position="8"/>
    </location>
</feature>
<feature type="modified residue" description="6'-bromotryptophan; partial" evidence="5">
    <location>
        <position position="7"/>
    </location>
</feature>
<feature type="modified residue" description="Cysteine amide" evidence="5">
    <location>
        <position position="8"/>
    </location>
</feature>
<feature type="disulfide bond" evidence="5">
    <location>
        <begin position="2"/>
        <end position="8"/>
    </location>
</feature>
<name>COW44_CONLI</name>